<feature type="signal peptide" evidence="1">
    <location>
        <begin position="1"/>
        <end position="20"/>
    </location>
</feature>
<feature type="chain" id="PRO_0000307902" description="UPF0499 protein CHGG_06021">
    <location>
        <begin position="21"/>
        <end position="73"/>
    </location>
</feature>
<feature type="disulfide bond" evidence="2">
    <location>
        <begin position="41"/>
        <end position="55"/>
    </location>
</feature>
<feature type="disulfide bond" evidence="2">
    <location>
        <begin position="48"/>
        <end position="60"/>
    </location>
</feature>
<feature type="disulfide bond" evidence="2">
    <location>
        <begin position="54"/>
        <end position="69"/>
    </location>
</feature>
<dbReference type="EMBL" id="CH408031">
    <property type="protein sequence ID" value="EAQ89402.1"/>
    <property type="molecule type" value="Genomic_DNA"/>
</dbReference>
<dbReference type="RefSeq" id="XP_001222116.1">
    <property type="nucleotide sequence ID" value="XM_001222115.1"/>
</dbReference>
<dbReference type="SMR" id="Q2H5P4"/>
<dbReference type="GeneID" id="4390461"/>
<dbReference type="VEuPathDB" id="FungiDB:CHGG_06021"/>
<dbReference type="eggNOG" id="ENOG502RJ86">
    <property type="taxonomic scope" value="Eukaryota"/>
</dbReference>
<dbReference type="HOGENOM" id="CLU_185484_0_0_1"/>
<dbReference type="InParanoid" id="Q2H5P4"/>
<dbReference type="OMA" id="DTDCCAG"/>
<dbReference type="OrthoDB" id="4562758at2759"/>
<dbReference type="Proteomes" id="UP000001056">
    <property type="component" value="Unassembled WGS sequence"/>
</dbReference>
<dbReference type="GO" id="GO:0005576">
    <property type="term" value="C:extracellular region"/>
    <property type="evidence" value="ECO:0007669"/>
    <property type="project" value="UniProtKB-SubCell"/>
</dbReference>
<accession>Q2H5P4</accession>
<name>U499_CHAGB</name>
<proteinExistence type="inferred from homology"/>
<sequence length="73" mass="7761">MKSSIHVVLFFLLSLVASMALPRRQAQAPFAVVDFSGKAACHSILTSCRVDTDCCAGLKCGIFDEDALCVPQG</sequence>
<comment type="subcellular location">
    <subcellularLocation>
        <location evidence="2">Secreted</location>
    </subcellularLocation>
</comment>
<comment type="domain">
    <text evidence="2">The presence of a 'disulfide through disulfide knot' structurally defines this protein as a knottin.</text>
</comment>
<comment type="similarity">
    <text evidence="2">Belongs to the UPF0499 family.</text>
</comment>
<protein>
    <recommendedName>
        <fullName>UPF0499 protein CHGG_06021</fullName>
    </recommendedName>
</protein>
<organism>
    <name type="scientific">Chaetomium globosum (strain ATCC 6205 / CBS 148.51 / DSM 1962 / NBRC 6347 / NRRL 1970)</name>
    <name type="common">Soil fungus</name>
    <dbReference type="NCBI Taxonomy" id="306901"/>
    <lineage>
        <taxon>Eukaryota</taxon>
        <taxon>Fungi</taxon>
        <taxon>Dikarya</taxon>
        <taxon>Ascomycota</taxon>
        <taxon>Pezizomycotina</taxon>
        <taxon>Sordariomycetes</taxon>
        <taxon>Sordariomycetidae</taxon>
        <taxon>Sordariales</taxon>
        <taxon>Chaetomiaceae</taxon>
        <taxon>Chaetomium</taxon>
    </lineage>
</organism>
<gene>
    <name type="ORF">CHGG_06021</name>
</gene>
<evidence type="ECO:0000255" key="1"/>
<evidence type="ECO:0000305" key="2"/>
<keyword id="KW-1015">Disulfide bond</keyword>
<keyword id="KW-0960">Knottin</keyword>
<keyword id="KW-1185">Reference proteome</keyword>
<keyword id="KW-0964">Secreted</keyword>
<keyword id="KW-0732">Signal</keyword>
<reference key="1">
    <citation type="journal article" date="2015" name="Genome Announc.">
        <title>Draft genome sequence of the cellulolytic fungus Chaetomium globosum.</title>
        <authorList>
            <person name="Cuomo C.A."/>
            <person name="Untereiner W.A."/>
            <person name="Ma L.-J."/>
            <person name="Grabherr M."/>
            <person name="Birren B.W."/>
        </authorList>
    </citation>
    <scope>NUCLEOTIDE SEQUENCE [LARGE SCALE GENOMIC DNA]</scope>
    <source>
        <strain>ATCC 6205 / CBS 148.51 / DSM 1962 / NBRC 6347 / NRRL 1970</strain>
    </source>
</reference>